<reference key="1">
    <citation type="journal article" date="2006" name="Proc. Natl. Acad. Sci. U.S.A.">
        <title>Genome reduction in Leptospira borgpetersenii reflects limited transmission potential.</title>
        <authorList>
            <person name="Bulach D.M."/>
            <person name="Zuerner R.L."/>
            <person name="Wilson P."/>
            <person name="Seemann T."/>
            <person name="McGrath A."/>
            <person name="Cullen P.A."/>
            <person name="Davis J."/>
            <person name="Johnson M."/>
            <person name="Kuczek E."/>
            <person name="Alt D.P."/>
            <person name="Peterson-Burch B."/>
            <person name="Coppel R.L."/>
            <person name="Rood J.I."/>
            <person name="Davies J.K."/>
            <person name="Adler B."/>
        </authorList>
    </citation>
    <scope>NUCLEOTIDE SEQUENCE [LARGE SCALE GENOMIC DNA]</scope>
    <source>
        <strain>L550</strain>
    </source>
</reference>
<sequence length="365" mass="42084">MFLKHLTLQNFRSYEELSLDFNSRLIFFVGDNGEGKTNLLEAICMLSWLKSFRESEDSNLIRWGSENYFLRGKIKGDQKESVLEVGFTAKPTVKRKLKFNQEEVKKRTDLIGKFITVLLTPMDLKIIEGGPAERRKFIDAFISSFDPFYLECLLEYNKILKHRNALLKTGISDASHLSIWDRKLIEKGVLILNKRKEIVFGLNSFYQPNLNKLSGGKDELEMIYGPNVKDKDEFVEKLGRNLGKDLRLGYTSVGIHRDDLFIGADKRDITEFGSQGQKRSTVIALKAATFNYYRNVLDTMPVLLIDDVIRELDVKRREYFVDLVINAGQAFFTTTDLEGIQDYVGKLKDQKQIFLIQQGNIQFAK</sequence>
<gene>
    <name evidence="1" type="primary">recF</name>
    <name type="ordered locus">LBL_0006</name>
</gene>
<name>RECF_LEPBL</name>
<comment type="function">
    <text evidence="1">The RecF protein is involved in DNA metabolism; it is required for DNA replication and normal SOS inducibility. RecF binds preferentially to single-stranded, linear DNA. It also seems to bind ATP.</text>
</comment>
<comment type="subcellular location">
    <subcellularLocation>
        <location evidence="1">Cytoplasm</location>
    </subcellularLocation>
</comment>
<comment type="similarity">
    <text evidence="1">Belongs to the RecF family.</text>
</comment>
<protein>
    <recommendedName>
        <fullName evidence="1">DNA replication and repair protein RecF</fullName>
    </recommendedName>
</protein>
<organism>
    <name type="scientific">Leptospira borgpetersenii serovar Hardjo-bovis (strain L550)</name>
    <dbReference type="NCBI Taxonomy" id="355276"/>
    <lineage>
        <taxon>Bacteria</taxon>
        <taxon>Pseudomonadati</taxon>
        <taxon>Spirochaetota</taxon>
        <taxon>Spirochaetia</taxon>
        <taxon>Leptospirales</taxon>
        <taxon>Leptospiraceae</taxon>
        <taxon>Leptospira</taxon>
    </lineage>
</organism>
<feature type="chain" id="PRO_1000048538" description="DNA replication and repair protein RecF">
    <location>
        <begin position="1"/>
        <end position="365"/>
    </location>
</feature>
<feature type="binding site" evidence="1">
    <location>
        <begin position="30"/>
        <end position="37"/>
    </location>
    <ligand>
        <name>ATP</name>
        <dbReference type="ChEBI" id="CHEBI:30616"/>
    </ligand>
</feature>
<keyword id="KW-0067">ATP-binding</keyword>
<keyword id="KW-0963">Cytoplasm</keyword>
<keyword id="KW-0227">DNA damage</keyword>
<keyword id="KW-0234">DNA repair</keyword>
<keyword id="KW-0235">DNA replication</keyword>
<keyword id="KW-0238">DNA-binding</keyword>
<keyword id="KW-0547">Nucleotide-binding</keyword>
<keyword id="KW-0742">SOS response</keyword>
<dbReference type="EMBL" id="CP000348">
    <property type="protein sequence ID" value="ABJ77645.1"/>
    <property type="molecule type" value="Genomic_DNA"/>
</dbReference>
<dbReference type="RefSeq" id="WP_011669139.1">
    <property type="nucleotide sequence ID" value="NC_008508.1"/>
</dbReference>
<dbReference type="SMR" id="Q056V0"/>
<dbReference type="KEGG" id="lbl:LBL_0006"/>
<dbReference type="HOGENOM" id="CLU_040267_0_1_12"/>
<dbReference type="GO" id="GO:0005737">
    <property type="term" value="C:cytoplasm"/>
    <property type="evidence" value="ECO:0007669"/>
    <property type="project" value="UniProtKB-SubCell"/>
</dbReference>
<dbReference type="GO" id="GO:0005524">
    <property type="term" value="F:ATP binding"/>
    <property type="evidence" value="ECO:0007669"/>
    <property type="project" value="UniProtKB-UniRule"/>
</dbReference>
<dbReference type="GO" id="GO:0003697">
    <property type="term" value="F:single-stranded DNA binding"/>
    <property type="evidence" value="ECO:0007669"/>
    <property type="project" value="UniProtKB-UniRule"/>
</dbReference>
<dbReference type="GO" id="GO:0006260">
    <property type="term" value="P:DNA replication"/>
    <property type="evidence" value="ECO:0007669"/>
    <property type="project" value="UniProtKB-UniRule"/>
</dbReference>
<dbReference type="GO" id="GO:0000731">
    <property type="term" value="P:DNA synthesis involved in DNA repair"/>
    <property type="evidence" value="ECO:0007669"/>
    <property type="project" value="TreeGrafter"/>
</dbReference>
<dbReference type="GO" id="GO:0006302">
    <property type="term" value="P:double-strand break repair"/>
    <property type="evidence" value="ECO:0007669"/>
    <property type="project" value="TreeGrafter"/>
</dbReference>
<dbReference type="GO" id="GO:0009432">
    <property type="term" value="P:SOS response"/>
    <property type="evidence" value="ECO:0007669"/>
    <property type="project" value="UniProtKB-UniRule"/>
</dbReference>
<dbReference type="Gene3D" id="3.40.50.300">
    <property type="entry name" value="P-loop containing nucleotide triphosphate hydrolases"/>
    <property type="match status" value="1"/>
</dbReference>
<dbReference type="Gene3D" id="1.20.1050.90">
    <property type="entry name" value="RecF/RecN/SMC, N-terminal domain"/>
    <property type="match status" value="1"/>
</dbReference>
<dbReference type="HAMAP" id="MF_00365">
    <property type="entry name" value="RecF"/>
    <property type="match status" value="1"/>
</dbReference>
<dbReference type="InterPro" id="IPR001238">
    <property type="entry name" value="DNA-binding_RecF"/>
</dbReference>
<dbReference type="InterPro" id="IPR018078">
    <property type="entry name" value="DNA-binding_RecF_CS"/>
</dbReference>
<dbReference type="InterPro" id="IPR027417">
    <property type="entry name" value="P-loop_NTPase"/>
</dbReference>
<dbReference type="InterPro" id="IPR003395">
    <property type="entry name" value="RecF/RecN/SMC_N"/>
</dbReference>
<dbReference type="InterPro" id="IPR042174">
    <property type="entry name" value="RecF_2"/>
</dbReference>
<dbReference type="NCBIfam" id="TIGR00611">
    <property type="entry name" value="recf"/>
    <property type="match status" value="1"/>
</dbReference>
<dbReference type="PANTHER" id="PTHR32182">
    <property type="entry name" value="DNA REPLICATION AND REPAIR PROTEIN RECF"/>
    <property type="match status" value="1"/>
</dbReference>
<dbReference type="PANTHER" id="PTHR32182:SF0">
    <property type="entry name" value="DNA REPLICATION AND REPAIR PROTEIN RECF"/>
    <property type="match status" value="1"/>
</dbReference>
<dbReference type="Pfam" id="PF02463">
    <property type="entry name" value="SMC_N"/>
    <property type="match status" value="1"/>
</dbReference>
<dbReference type="SUPFAM" id="SSF52540">
    <property type="entry name" value="P-loop containing nucleoside triphosphate hydrolases"/>
    <property type="match status" value="1"/>
</dbReference>
<dbReference type="PROSITE" id="PS00617">
    <property type="entry name" value="RECF_1"/>
    <property type="match status" value="1"/>
</dbReference>
<dbReference type="PROSITE" id="PS00618">
    <property type="entry name" value="RECF_2"/>
    <property type="match status" value="1"/>
</dbReference>
<proteinExistence type="inferred from homology"/>
<accession>Q056V0</accession>
<evidence type="ECO:0000255" key="1">
    <source>
        <dbReference type="HAMAP-Rule" id="MF_00365"/>
    </source>
</evidence>